<keyword id="KW-0963">Cytoplasm</keyword>
<keyword id="KW-0539">Nucleus</keyword>
<keyword id="KW-1185">Reference proteome</keyword>
<keyword id="KW-0819">tRNA processing</keyword>
<dbReference type="EMBL" id="CH473954">
    <property type="protein sequence ID" value="EDL77087.1"/>
    <property type="molecule type" value="Genomic_DNA"/>
</dbReference>
<dbReference type="EMBL" id="BC166773">
    <property type="protein sequence ID" value="AAI66773.1"/>
    <property type="molecule type" value="mRNA"/>
</dbReference>
<dbReference type="RefSeq" id="NP_001102252.1">
    <property type="nucleotide sequence ID" value="NM_001108782.2"/>
</dbReference>
<dbReference type="SMR" id="B2RYG8"/>
<dbReference type="BioGRID" id="263997">
    <property type="interactions" value="1"/>
</dbReference>
<dbReference type="FunCoup" id="B2RYG8">
    <property type="interactions" value="1761"/>
</dbReference>
<dbReference type="STRING" id="10116.ENSRNOP00000028288"/>
<dbReference type="PhosphoSitePlus" id="B2RYG8"/>
<dbReference type="jPOST" id="B2RYG8"/>
<dbReference type="PaxDb" id="10116-ENSRNOP00000028288"/>
<dbReference type="PeptideAtlas" id="B2RYG8"/>
<dbReference type="Ensembl" id="ENSRNOT00000028288.8">
    <property type="protein sequence ID" value="ENSRNOP00000028288.5"/>
    <property type="gene ID" value="ENSRNOG00000020847.8"/>
</dbReference>
<dbReference type="GeneID" id="363150"/>
<dbReference type="KEGG" id="rno:363150"/>
<dbReference type="AGR" id="RGD:1305478"/>
<dbReference type="CTD" id="54859"/>
<dbReference type="RGD" id="1305478">
    <property type="gene designation" value="Elp6"/>
</dbReference>
<dbReference type="eggNOG" id="KOG4723">
    <property type="taxonomic scope" value="Eukaryota"/>
</dbReference>
<dbReference type="GeneTree" id="ENSGT00390000011734"/>
<dbReference type="HOGENOM" id="CLU_092581_2_0_1"/>
<dbReference type="InParanoid" id="B2RYG8"/>
<dbReference type="OMA" id="MFTELNS"/>
<dbReference type="OrthoDB" id="9995306at2759"/>
<dbReference type="PhylomeDB" id="B2RYG8"/>
<dbReference type="TreeFam" id="TF331346"/>
<dbReference type="UniPathway" id="UPA00988"/>
<dbReference type="PRO" id="PR:B2RYG8"/>
<dbReference type="Proteomes" id="UP000002494">
    <property type="component" value="Chromosome 8"/>
</dbReference>
<dbReference type="Proteomes" id="UP000234681">
    <property type="component" value="Chromosome 8"/>
</dbReference>
<dbReference type="Bgee" id="ENSRNOG00000020847">
    <property type="expression patterns" value="Expressed in pancreas and 20 other cell types or tissues"/>
</dbReference>
<dbReference type="GO" id="GO:0005829">
    <property type="term" value="C:cytosol"/>
    <property type="evidence" value="ECO:0000266"/>
    <property type="project" value="RGD"/>
</dbReference>
<dbReference type="GO" id="GO:0033588">
    <property type="term" value="C:elongator holoenzyme complex"/>
    <property type="evidence" value="ECO:0000250"/>
    <property type="project" value="UniProtKB"/>
</dbReference>
<dbReference type="GO" id="GO:0005634">
    <property type="term" value="C:nucleus"/>
    <property type="evidence" value="ECO:0000266"/>
    <property type="project" value="RGD"/>
</dbReference>
<dbReference type="GO" id="GO:0006915">
    <property type="term" value="P:apoptotic process"/>
    <property type="evidence" value="ECO:0000266"/>
    <property type="project" value="RGD"/>
</dbReference>
<dbReference type="GO" id="GO:0097352">
    <property type="term" value="P:autophagosome maturation"/>
    <property type="evidence" value="ECO:0000266"/>
    <property type="project" value="RGD"/>
</dbReference>
<dbReference type="GO" id="GO:0006914">
    <property type="term" value="P:autophagy"/>
    <property type="evidence" value="ECO:0000266"/>
    <property type="project" value="RGD"/>
</dbReference>
<dbReference type="GO" id="GO:0033554">
    <property type="term" value="P:cellular response to stress"/>
    <property type="evidence" value="ECO:0000266"/>
    <property type="project" value="RGD"/>
</dbReference>
<dbReference type="GO" id="GO:0048877">
    <property type="term" value="P:homeostasis of number of retina cells"/>
    <property type="evidence" value="ECO:0000266"/>
    <property type="project" value="RGD"/>
</dbReference>
<dbReference type="GO" id="GO:0141084">
    <property type="term" value="P:inflammasome-mediated signaling pathway"/>
    <property type="evidence" value="ECO:0000266"/>
    <property type="project" value="RGD"/>
</dbReference>
<dbReference type="GO" id="GO:0007626">
    <property type="term" value="P:locomotory behavior"/>
    <property type="evidence" value="ECO:0000266"/>
    <property type="project" value="RGD"/>
</dbReference>
<dbReference type="GO" id="GO:0061744">
    <property type="term" value="P:motor behavior"/>
    <property type="evidence" value="ECO:0000266"/>
    <property type="project" value="RGD"/>
</dbReference>
<dbReference type="GO" id="GO:0050905">
    <property type="term" value="P:neuromuscular process"/>
    <property type="evidence" value="ECO:0000266"/>
    <property type="project" value="RGD"/>
</dbReference>
<dbReference type="GO" id="GO:0050885">
    <property type="term" value="P:neuromuscular process controlling balance"/>
    <property type="evidence" value="ECO:0000266"/>
    <property type="project" value="RGD"/>
</dbReference>
<dbReference type="GO" id="GO:0051402">
    <property type="term" value="P:neuron apoptotic process"/>
    <property type="evidence" value="ECO:0000266"/>
    <property type="project" value="RGD"/>
</dbReference>
<dbReference type="GO" id="GO:0046530">
    <property type="term" value="P:photoreceptor cell differentiation"/>
    <property type="evidence" value="ECO:0000266"/>
    <property type="project" value="RGD"/>
</dbReference>
<dbReference type="GO" id="GO:0030335">
    <property type="term" value="P:positive regulation of cell migration"/>
    <property type="evidence" value="ECO:0000250"/>
    <property type="project" value="UniProtKB"/>
</dbReference>
<dbReference type="GO" id="GO:0006457">
    <property type="term" value="P:protein folding"/>
    <property type="evidence" value="ECO:0000266"/>
    <property type="project" value="RGD"/>
</dbReference>
<dbReference type="GO" id="GO:0006986">
    <property type="term" value="P:response to unfolded protein"/>
    <property type="evidence" value="ECO:0000266"/>
    <property type="project" value="RGD"/>
</dbReference>
<dbReference type="GO" id="GO:0060041">
    <property type="term" value="P:retina development in camera-type eye"/>
    <property type="evidence" value="ECO:0000266"/>
    <property type="project" value="RGD"/>
</dbReference>
<dbReference type="GO" id="GO:0006412">
    <property type="term" value="P:translation"/>
    <property type="evidence" value="ECO:0000266"/>
    <property type="project" value="RGD"/>
</dbReference>
<dbReference type="GO" id="GO:0002098">
    <property type="term" value="P:tRNA wobble uridine modification"/>
    <property type="evidence" value="ECO:0007669"/>
    <property type="project" value="InterPro"/>
</dbReference>
<dbReference type="GO" id="GO:0010992">
    <property type="term" value="P:ubiquitin recycling"/>
    <property type="evidence" value="ECO:0000266"/>
    <property type="project" value="RGD"/>
</dbReference>
<dbReference type="CDD" id="cd19495">
    <property type="entry name" value="Elp6"/>
    <property type="match status" value="1"/>
</dbReference>
<dbReference type="FunFam" id="3.40.50.300:FF:001078">
    <property type="entry name" value="Elongator acetyltransferase complex subunit 6"/>
    <property type="match status" value="1"/>
</dbReference>
<dbReference type="Gene3D" id="3.40.50.300">
    <property type="entry name" value="P-loop containing nucleotide triphosphate hydrolases"/>
    <property type="match status" value="1"/>
</dbReference>
<dbReference type="InterPro" id="IPR018627">
    <property type="entry name" value="ELP6"/>
</dbReference>
<dbReference type="InterPro" id="IPR027417">
    <property type="entry name" value="P-loop_NTPase"/>
</dbReference>
<dbReference type="PANTHER" id="PTHR16184">
    <property type="entry name" value="ELONGATOR COMPLEX PROTEIN 6"/>
    <property type="match status" value="1"/>
</dbReference>
<dbReference type="PANTHER" id="PTHR16184:SF6">
    <property type="entry name" value="ELONGATOR COMPLEX PROTEIN 6"/>
    <property type="match status" value="1"/>
</dbReference>
<dbReference type="Pfam" id="PF09807">
    <property type="entry name" value="ELP6"/>
    <property type="match status" value="1"/>
</dbReference>
<evidence type="ECO:0000250" key="1">
    <source>
        <dbReference type="UniProtKB" id="Q0PNE2"/>
    </source>
</evidence>
<evidence type="ECO:0000250" key="2">
    <source>
        <dbReference type="UniProtKB" id="Q8BK75"/>
    </source>
</evidence>
<evidence type="ECO:0000305" key="3"/>
<sequence>MFPELNNLLSITPDRTEQGKLTLLCDAKTDGSFLVHHFLSFYLKANCKVCFVALVQSFSHYNIVGQKLGVSLTAARERGQLVFLEGLKSSVEVLFHSQEEPHPLQFLREAGAGNLQSLYTFIQDTLKPADSGESPWKCPVLLVDNLSVLLSLGVGAVAVLDFMQYCRATVCCELKGNVVALVHDTEGAEDEENNILLNGLSHQSHLILRTQGLATGFCKDVHGQLSILWRRSSQPTAQRARSLTYQYKIQDKNVSFFAKGMSRAVL</sequence>
<reference key="1">
    <citation type="submission" date="2005-09" db="EMBL/GenBank/DDBJ databases">
        <authorList>
            <person name="Mural R.J."/>
            <person name="Adams M.D."/>
            <person name="Myers E.W."/>
            <person name="Smith H.O."/>
            <person name="Venter J.C."/>
        </authorList>
    </citation>
    <scope>NUCLEOTIDE SEQUENCE [LARGE SCALE GENOMIC DNA]</scope>
    <source>
        <strain>Brown Norway</strain>
    </source>
</reference>
<reference key="2">
    <citation type="journal article" date="2004" name="Genome Res.">
        <title>The status, quality, and expansion of the NIH full-length cDNA project: the Mammalian Gene Collection (MGC).</title>
        <authorList>
            <consortium name="The MGC Project Team"/>
        </authorList>
    </citation>
    <scope>NUCLEOTIDE SEQUENCE [LARGE SCALE MRNA]</scope>
    <source>
        <tissue>Prostate</tissue>
    </source>
</reference>
<accession>B2RYG8</accession>
<feature type="chain" id="PRO_0000351071" description="Elongator complex protein 6">
    <location>
        <begin position="1"/>
        <end position="266"/>
    </location>
</feature>
<proteinExistence type="evidence at transcript level"/>
<gene>
    <name type="primary">Elp6</name>
</gene>
<protein>
    <recommendedName>
        <fullName>Elongator complex protein 6</fullName>
    </recommendedName>
    <alternativeName>
        <fullName>Protein TMEM103</fullName>
    </alternativeName>
</protein>
<organism>
    <name type="scientific">Rattus norvegicus</name>
    <name type="common">Rat</name>
    <dbReference type="NCBI Taxonomy" id="10116"/>
    <lineage>
        <taxon>Eukaryota</taxon>
        <taxon>Metazoa</taxon>
        <taxon>Chordata</taxon>
        <taxon>Craniata</taxon>
        <taxon>Vertebrata</taxon>
        <taxon>Euteleostomi</taxon>
        <taxon>Mammalia</taxon>
        <taxon>Eutheria</taxon>
        <taxon>Euarchontoglires</taxon>
        <taxon>Glires</taxon>
        <taxon>Rodentia</taxon>
        <taxon>Myomorpha</taxon>
        <taxon>Muroidea</taxon>
        <taxon>Muridae</taxon>
        <taxon>Murinae</taxon>
        <taxon>Rattus</taxon>
    </lineage>
</organism>
<comment type="function">
    <text evidence="1 2">Component of the elongator complex which is required for multiple tRNA modifications, including mcm5U (5-methoxycarbonylmethyl uridine), mcm5s2U (5-methoxycarbonylmethyl-2-thiouridine), and ncm5U (5-carbamoylmethyl uridine) (By similarity). The elongator complex catalyzes formation of carboxymethyluridine in the wobble base at position 34 in tRNAs (By similarity). Involved in cell migration (By similarity).</text>
</comment>
<comment type="pathway">
    <text evidence="1">tRNA modification; 5-methoxycarbonylmethyl-2-thiouridine-tRNA biosynthesis.</text>
</comment>
<comment type="subunit">
    <text evidence="1">Component of the elongator complex which consists of ELP1, ELP2, ELP3, ELP4, ELP5 and ELP6.</text>
</comment>
<comment type="subcellular location">
    <subcellularLocation>
        <location evidence="1">Cytoplasm</location>
    </subcellularLocation>
    <subcellularLocation>
        <location evidence="1">Nucleus</location>
    </subcellularLocation>
    <text evidence="1">Concentrates in the nucleus upon insulin stimulation.</text>
</comment>
<comment type="similarity">
    <text evidence="3">Belongs to the ELP6 family.</text>
</comment>
<comment type="caution">
    <text evidence="1">The elongator complex was originally thought to play a role in transcription elongation. However, it is no longer thought to play a direct role in this process and its primary function is thought to be in tRNA modification.</text>
</comment>
<name>ELP6_RAT</name>